<comment type="function">
    <text evidence="1">As part of a cytosolic protein quality control complex, the bag6/bat3 complex, maintains misfolded and hydrophobic patches-containing proteins in a soluble state and participates in their proper delivery to the endoplasmic reticulum or alternatively can promote their sorting to the proteasome where they undergo degradation. The bag6/bat3 complex is involved in the post-translational delivery of tail-anchored/type II transmembrane proteins to the endoplasmic reticulum membrane. Similarly, the bag6/bat3 complex also functions as a sorting platform for proteins of the secretory pathway that are mislocalized to the cytosol either delivering them to the proteasome for degradation or to the endoplasmic reticulum. The bag6/bat3 complex also plays a role in the endoplasmic reticulum-associated degradation (ERAD), a quality control mechanism that eliminates unwanted proteins of the endoplasmic reticulum through their retrotranslocation to the cytosol and their targeting to the proteasome. It maintains these retrotranslocated proteins in an unfolded yet soluble state condition in the cytosol to ensure their proper delivery to the proteasome.</text>
</comment>
<comment type="subunit">
    <text evidence="1">Component of the bag6/bat3 complex.</text>
</comment>
<comment type="subcellular location">
    <subcellularLocation>
        <location evidence="1">Cytoplasm</location>
        <location evidence="1">Cytosol</location>
    </subcellularLocation>
    <subcellularLocation>
        <location evidence="1">Nucleus</location>
    </subcellularLocation>
</comment>
<protein>
    <recommendedName>
        <fullName>Ubiquitin-like protein 4A</fullName>
    </recommendedName>
</protein>
<dbReference type="EMBL" id="BT079424">
    <property type="protein sequence ID" value="ACO13848.1"/>
    <property type="molecule type" value="mRNA"/>
</dbReference>
<dbReference type="RefSeq" id="NP_001291952.1">
    <property type="nucleotide sequence ID" value="NM_001305023.1"/>
</dbReference>
<dbReference type="SMR" id="C1BXU5"/>
<dbReference type="FunCoup" id="C1BXU5">
    <property type="interactions" value="668"/>
</dbReference>
<dbReference type="STRING" id="8010.ENSELUP00000018203"/>
<dbReference type="Ensembl" id="ENSELUT00000028036.3">
    <property type="protein sequence ID" value="ENSELUP00000018221.1"/>
    <property type="gene ID" value="ENSELUG00000001164.3"/>
</dbReference>
<dbReference type="GeneID" id="105014038"/>
<dbReference type="KEGG" id="els:105014038"/>
<dbReference type="CTD" id="8266"/>
<dbReference type="GeneTree" id="ENSGT00730000111022"/>
<dbReference type="InParanoid" id="C1BXU5"/>
<dbReference type="OMA" id="RGFRKFY"/>
<dbReference type="OrthoDB" id="417450at2759"/>
<dbReference type="Proteomes" id="UP000265140">
    <property type="component" value="Chromosome 13"/>
</dbReference>
<dbReference type="Bgee" id="ENSELUG00000001164">
    <property type="expression patterns" value="Expressed in muscle tissue and 14 other cell types or tissues"/>
</dbReference>
<dbReference type="GO" id="GO:0071818">
    <property type="term" value="C:BAT3 complex"/>
    <property type="evidence" value="ECO:0000250"/>
    <property type="project" value="UniProtKB"/>
</dbReference>
<dbReference type="GO" id="GO:0005829">
    <property type="term" value="C:cytosol"/>
    <property type="evidence" value="ECO:0000250"/>
    <property type="project" value="UniProtKB"/>
</dbReference>
<dbReference type="GO" id="GO:0005634">
    <property type="term" value="C:nucleus"/>
    <property type="evidence" value="ECO:0007669"/>
    <property type="project" value="UniProtKB-SubCell"/>
</dbReference>
<dbReference type="GO" id="GO:0051087">
    <property type="term" value="F:protein-folding chaperone binding"/>
    <property type="evidence" value="ECO:0007669"/>
    <property type="project" value="TreeGrafter"/>
</dbReference>
<dbReference type="GO" id="GO:0006620">
    <property type="term" value="P:post-translational protein targeting to endoplasmic reticulum membrane"/>
    <property type="evidence" value="ECO:0007669"/>
    <property type="project" value="InterPro"/>
</dbReference>
<dbReference type="GO" id="GO:0071816">
    <property type="term" value="P:tail-anchored membrane protein insertion into ER membrane"/>
    <property type="evidence" value="ECO:0000250"/>
    <property type="project" value="UniProtKB"/>
</dbReference>
<dbReference type="CDD" id="cd01807">
    <property type="entry name" value="Ubl_UBL4A_like"/>
    <property type="match status" value="1"/>
</dbReference>
<dbReference type="FunFam" id="3.10.20.90:FF:000144">
    <property type="entry name" value="Ubiquitin-like protein 4A"/>
    <property type="match status" value="1"/>
</dbReference>
<dbReference type="Gene3D" id="3.10.20.90">
    <property type="entry name" value="Phosphatidylinositol 3-kinase Catalytic Subunit, Chain A, domain 1"/>
    <property type="match status" value="1"/>
</dbReference>
<dbReference type="InterPro" id="IPR000626">
    <property type="entry name" value="Ubiquitin-like_dom"/>
</dbReference>
<dbReference type="InterPro" id="IPR029071">
    <property type="entry name" value="Ubiquitin-like_domsf"/>
</dbReference>
<dbReference type="InterPro" id="IPR019954">
    <property type="entry name" value="Ubiquitin_CS"/>
</dbReference>
<dbReference type="InterPro" id="IPR019956">
    <property type="entry name" value="Ubiquitin_dom"/>
</dbReference>
<dbReference type="InterPro" id="IPR041421">
    <property type="entry name" value="Ubl4_C_TUGS"/>
</dbReference>
<dbReference type="InterPro" id="IPR047154">
    <property type="entry name" value="UBL4A-like"/>
</dbReference>
<dbReference type="InterPro" id="IPR044724">
    <property type="entry name" value="Ubl_UBL4A-like"/>
</dbReference>
<dbReference type="PANTHER" id="PTHR46555">
    <property type="entry name" value="UBIQUITIN-LIKE PROTEIN 4A"/>
    <property type="match status" value="1"/>
</dbReference>
<dbReference type="PANTHER" id="PTHR46555:SF1">
    <property type="entry name" value="UBIQUITIN-LIKE PROTEIN 4A"/>
    <property type="match status" value="1"/>
</dbReference>
<dbReference type="Pfam" id="PF17840">
    <property type="entry name" value="Tugs"/>
    <property type="match status" value="1"/>
</dbReference>
<dbReference type="Pfam" id="PF00240">
    <property type="entry name" value="ubiquitin"/>
    <property type="match status" value="1"/>
</dbReference>
<dbReference type="PRINTS" id="PR00348">
    <property type="entry name" value="UBIQUITIN"/>
</dbReference>
<dbReference type="SMART" id="SM00213">
    <property type="entry name" value="UBQ"/>
    <property type="match status" value="1"/>
</dbReference>
<dbReference type="SUPFAM" id="SSF54236">
    <property type="entry name" value="Ubiquitin-like"/>
    <property type="match status" value="1"/>
</dbReference>
<dbReference type="PROSITE" id="PS00299">
    <property type="entry name" value="UBIQUITIN_1"/>
    <property type="match status" value="1"/>
</dbReference>
<dbReference type="PROSITE" id="PS50053">
    <property type="entry name" value="UBIQUITIN_2"/>
    <property type="match status" value="1"/>
</dbReference>
<sequence>MILTVKPLQGKECNVQVTEDEKVSTVKELVSERLNIPPNQQRLLYKGKALADEHRLSDYSIGPEAKLNLVVRPAGERSGVTGMASSNSAVGGVWQTLSTVLAKHFSPADAAKVQEQLIKDYERSLRQLSLDDIERLAVRLLHPDSEGMDTSYLD</sequence>
<accession>C1BXU5</accession>
<gene>
    <name type="primary">ubl4a</name>
</gene>
<keyword id="KW-0963">Cytoplasm</keyword>
<keyword id="KW-0539">Nucleus</keyword>
<keyword id="KW-1185">Reference proteome</keyword>
<keyword id="KW-0813">Transport</keyword>
<feature type="chain" id="PRO_0000403743" description="Ubiquitin-like protein 4A">
    <location>
        <begin position="1"/>
        <end position="154"/>
    </location>
</feature>
<feature type="domain" description="Ubiquitin-like" evidence="2">
    <location>
        <begin position="1"/>
        <end position="76"/>
    </location>
</feature>
<name>UBL4A_ESOLU</name>
<organism>
    <name type="scientific">Esox lucius</name>
    <name type="common">Northern pike</name>
    <dbReference type="NCBI Taxonomy" id="8010"/>
    <lineage>
        <taxon>Eukaryota</taxon>
        <taxon>Metazoa</taxon>
        <taxon>Chordata</taxon>
        <taxon>Craniata</taxon>
        <taxon>Vertebrata</taxon>
        <taxon>Euteleostomi</taxon>
        <taxon>Actinopterygii</taxon>
        <taxon>Neopterygii</taxon>
        <taxon>Teleostei</taxon>
        <taxon>Protacanthopterygii</taxon>
        <taxon>Esociformes</taxon>
        <taxon>Esocidae</taxon>
        <taxon>Esox</taxon>
    </lineage>
</organism>
<evidence type="ECO:0000250" key="1">
    <source>
        <dbReference type="UniProtKB" id="P11441"/>
    </source>
</evidence>
<evidence type="ECO:0000255" key="2">
    <source>
        <dbReference type="PROSITE-ProRule" id="PRU00214"/>
    </source>
</evidence>
<proteinExistence type="evidence at transcript level"/>
<reference key="1">
    <citation type="submission" date="2009-03" db="EMBL/GenBank/DDBJ databases">
        <title>Esox lucius ESTs and full-length cDNAs.</title>
        <authorList>
            <person name="Leong J."/>
            <person name="Jantzen S."/>
            <person name="Cooper G."/>
            <person name="Davidson W.S."/>
            <person name="Koop B.F."/>
        </authorList>
    </citation>
    <scope>NUCLEOTIDE SEQUENCE [LARGE SCALE MRNA]</scope>
    <source>
        <tissue>Kidney</tissue>
    </source>
</reference>